<proteinExistence type="inferred from homology"/>
<organism>
    <name type="scientific">Ustilaginoidea virens</name>
    <name type="common">Rice false smut fungus</name>
    <name type="synonym">Villosiclava virens</name>
    <dbReference type="NCBI Taxonomy" id="1159556"/>
    <lineage>
        <taxon>Eukaryota</taxon>
        <taxon>Fungi</taxon>
        <taxon>Dikarya</taxon>
        <taxon>Ascomycota</taxon>
        <taxon>Pezizomycotina</taxon>
        <taxon>Sordariomycetes</taxon>
        <taxon>Hypocreomycetidae</taxon>
        <taxon>Hypocreales</taxon>
        <taxon>Clavicipitaceae</taxon>
        <taxon>Ustilaginoidea</taxon>
    </lineage>
</organism>
<protein>
    <recommendedName>
        <fullName evidence="5">Efflux pump ustT</fullName>
    </recommendedName>
    <alternativeName>
        <fullName evidence="4">Ustilaginoidins biosynthesis cluster protein T</fullName>
    </alternativeName>
</protein>
<keyword id="KW-1003">Cell membrane</keyword>
<keyword id="KW-0325">Glycoprotein</keyword>
<keyword id="KW-0472">Membrane</keyword>
<keyword id="KW-0812">Transmembrane</keyword>
<keyword id="KW-1133">Transmembrane helix</keyword>
<keyword id="KW-0813">Transport</keyword>
<gene>
    <name evidence="4" type="primary">ustT</name>
    <name type="ORF">UVI_02036180</name>
</gene>
<reference key="1">
    <citation type="journal article" date="2016" name="Genome Announc.">
        <title>Genome sequence of Ustilaginoidea virens IPU010, a rice pathogenic fungus causing false smut.</title>
        <authorList>
            <person name="Kumagai T."/>
            <person name="Ishii T."/>
            <person name="Terai G."/>
            <person name="Umemura M."/>
            <person name="Machida M."/>
            <person name="Asai K."/>
        </authorList>
    </citation>
    <scope>NUCLEOTIDE SEQUENCE [LARGE SCALE GENOMIC DNA]</scope>
    <source>
        <strain>IPU010</strain>
    </source>
</reference>
<reference key="2">
    <citation type="journal article" date="2019" name="Angew. Chem. Int. Ed.">
        <title>Enantioselective phenol coupling by laccases in the biosynthesis of fungal dimeric naphthopyrones.</title>
        <authorList>
            <person name="Obermaier S."/>
            <person name="Thiele W."/>
            <person name="Fuertges L."/>
            <person name="Mueller M."/>
        </authorList>
    </citation>
    <scope>FUNCTION</scope>
    <source>
        <strain>IPU010</strain>
    </source>
</reference>
<feature type="chain" id="PRO_0000448928" description="Efflux pump ustT">
    <location>
        <begin position="1"/>
        <end position="537"/>
    </location>
</feature>
<feature type="transmembrane region" description="Helical" evidence="1">
    <location>
        <begin position="71"/>
        <end position="91"/>
    </location>
</feature>
<feature type="transmembrane region" description="Helical" evidence="1">
    <location>
        <begin position="104"/>
        <end position="124"/>
    </location>
</feature>
<feature type="transmembrane region" description="Helical" evidence="1">
    <location>
        <begin position="137"/>
        <end position="157"/>
    </location>
</feature>
<feature type="transmembrane region" description="Helical" evidence="1">
    <location>
        <begin position="162"/>
        <end position="182"/>
    </location>
</feature>
<feature type="transmembrane region" description="Helical" evidence="1">
    <location>
        <begin position="193"/>
        <end position="213"/>
    </location>
</feature>
<feature type="transmembrane region" description="Helical" evidence="1">
    <location>
        <begin position="236"/>
        <end position="256"/>
    </location>
</feature>
<feature type="transmembrane region" description="Helical" evidence="1">
    <location>
        <begin position="266"/>
        <end position="286"/>
    </location>
</feature>
<feature type="transmembrane region" description="Helical" evidence="1">
    <location>
        <begin position="304"/>
        <end position="324"/>
    </location>
</feature>
<feature type="transmembrane region" description="Helical" evidence="1">
    <location>
        <begin position="339"/>
        <end position="359"/>
    </location>
</feature>
<feature type="transmembrane region" description="Helical" evidence="1">
    <location>
        <begin position="363"/>
        <end position="383"/>
    </location>
</feature>
<feature type="transmembrane region" description="Helical" evidence="1">
    <location>
        <begin position="397"/>
        <end position="417"/>
    </location>
</feature>
<feature type="transmembrane region" description="Helical" evidence="1">
    <location>
        <begin position="430"/>
        <end position="450"/>
    </location>
</feature>
<feature type="transmembrane region" description="Helical" evidence="1">
    <location>
        <begin position="507"/>
        <end position="527"/>
    </location>
</feature>
<feature type="region of interest" description="Disordered" evidence="3">
    <location>
        <begin position="1"/>
        <end position="50"/>
    </location>
</feature>
<feature type="compositionally biased region" description="Basic and acidic residues" evidence="3">
    <location>
        <begin position="1"/>
        <end position="25"/>
    </location>
</feature>
<feature type="glycosylation site" description="N-linked (GlcNAc...) asparagine" evidence="2">
    <location>
        <position position="47"/>
    </location>
</feature>
<feature type="glycosylation site" description="N-linked (GlcNAc...) asparagine" evidence="2">
    <location>
        <position position="333"/>
    </location>
</feature>
<feature type="glycosylation site" description="N-linked (GlcNAc...) asparagine" evidence="2">
    <location>
        <position position="501"/>
    </location>
</feature>
<accession>A0A1B5L780</accession>
<comment type="function">
    <text evidence="6">Efflux pump; part of the gene cluster that mediates the biosynthesis of ustilaginoidins, dimeric gamma-naphthopyrones isolated from different fungal species.</text>
</comment>
<comment type="subcellular location">
    <subcellularLocation>
        <location evidence="5">Cell membrane</location>
        <topology evidence="1">Multi-pass membrane protein</topology>
    </subcellularLocation>
</comment>
<comment type="similarity">
    <text evidence="5">Belongs to the major facilitator superfamily. TCR/Tet family.</text>
</comment>
<evidence type="ECO:0000255" key="1"/>
<evidence type="ECO:0000255" key="2">
    <source>
        <dbReference type="PROSITE-ProRule" id="PRU00498"/>
    </source>
</evidence>
<evidence type="ECO:0000256" key="3">
    <source>
        <dbReference type="SAM" id="MobiDB-lite"/>
    </source>
</evidence>
<evidence type="ECO:0000303" key="4">
    <source>
    </source>
</evidence>
<evidence type="ECO:0000305" key="5"/>
<evidence type="ECO:0000305" key="6">
    <source>
    </source>
</evidence>
<name>USTT_USTVR</name>
<dbReference type="EMBL" id="BBTG02000019">
    <property type="protein sequence ID" value="GAO19110.1"/>
    <property type="molecule type" value="Genomic_DNA"/>
</dbReference>
<dbReference type="SMR" id="A0A1B5L780"/>
<dbReference type="GlyCosmos" id="A0A1B5L780">
    <property type="glycosylation" value="3 sites, No reported glycans"/>
</dbReference>
<dbReference type="Proteomes" id="UP000054053">
    <property type="component" value="Unassembled WGS sequence"/>
</dbReference>
<dbReference type="GO" id="GO:0005886">
    <property type="term" value="C:plasma membrane"/>
    <property type="evidence" value="ECO:0007669"/>
    <property type="project" value="UniProtKB-SubCell"/>
</dbReference>
<dbReference type="GO" id="GO:0022857">
    <property type="term" value="F:transmembrane transporter activity"/>
    <property type="evidence" value="ECO:0007669"/>
    <property type="project" value="InterPro"/>
</dbReference>
<dbReference type="Gene3D" id="1.20.1250.20">
    <property type="entry name" value="MFS general substrate transporter like domains"/>
    <property type="match status" value="2"/>
</dbReference>
<dbReference type="InterPro" id="IPR011701">
    <property type="entry name" value="MFS"/>
</dbReference>
<dbReference type="InterPro" id="IPR020846">
    <property type="entry name" value="MFS_dom"/>
</dbReference>
<dbReference type="InterPro" id="IPR036259">
    <property type="entry name" value="MFS_trans_sf"/>
</dbReference>
<dbReference type="PANTHER" id="PTHR23501">
    <property type="entry name" value="MAJOR FACILITATOR SUPERFAMILY"/>
    <property type="match status" value="1"/>
</dbReference>
<dbReference type="PANTHER" id="PTHR23501:SF201">
    <property type="entry name" value="MFS AFLATOXIN EFFLUX PUMP"/>
    <property type="match status" value="1"/>
</dbReference>
<dbReference type="Pfam" id="PF07690">
    <property type="entry name" value="MFS_1"/>
    <property type="match status" value="1"/>
</dbReference>
<dbReference type="SUPFAM" id="SSF103473">
    <property type="entry name" value="MFS general substrate transporter"/>
    <property type="match status" value="1"/>
</dbReference>
<dbReference type="PROSITE" id="PS50850">
    <property type="entry name" value="MFS"/>
    <property type="match status" value="1"/>
</dbReference>
<sequence>MAKEAQSLHELDNMKEKEVDQEKKAPTSVGDQEEHDDPKKQASHSQNVSENGLVDEAAQEAPEDESQYPGPLAMAVIMVAISMGMFLVSLLPLGRFYKFYSPKWVYMSLVFIFVIGSAVGAGAMNSNTVIVGRAIQGIGLGGVLSGSTILIAENAPLHRQPMFLGILMATMSISAIVGPLIGGALTTHTSWRWCFILNIPIGGAIIAVLFFFVKAREGKEQRAQGWVEKIRQLDPLGSALLLPAVVCLILALQWAGSQYSWDNWRIILLFVFGGLLSIGFVVSQMLRPDTATVPPHVVCQRTVFGSFLFSAMTGGAMLVVTYWISDWFQAVQNVSAAQAGIRTIALVLSQAVGAIMGGGSSRLIGYPPPIMMISATFIAVGAGLLTTLNVDTKSANWIGYQILMGLGLGFGTQQASLAVQTVLKKDDIPTAISLIFFGMQLGGSIFVCIGQNVFNQVFVKLLGQAAIPGLDTDLVLRTGATEIRQLVHNDADLSKLVTTYNTSVTSTFYVALAAGITSMLSAFLVQWKSVKNVEPVH</sequence>